<keyword id="KW-0067">ATP-binding</keyword>
<keyword id="KW-0131">Cell cycle</keyword>
<keyword id="KW-0132">Cell division</keyword>
<keyword id="KW-0133">Cell shape</keyword>
<keyword id="KW-0961">Cell wall biogenesis/degradation</keyword>
<keyword id="KW-0963">Cytoplasm</keyword>
<keyword id="KW-0436">Ligase</keyword>
<keyword id="KW-0547">Nucleotide-binding</keyword>
<keyword id="KW-0573">Peptidoglycan synthesis</keyword>
<reference key="1">
    <citation type="submission" date="2007-09" db="EMBL/GenBank/DDBJ databases">
        <title>Complete genome sequencing of Rickettsia bellii.</title>
        <authorList>
            <person name="Madan A."/>
            <person name="Lee H."/>
            <person name="Madan A."/>
            <person name="Yoon J.-G."/>
            <person name="Ryu G.-Y."/>
            <person name="Dasch G."/>
            <person name="Ereemeva M."/>
        </authorList>
    </citation>
    <scope>NUCLEOTIDE SEQUENCE [LARGE SCALE GENOMIC DNA]</scope>
    <source>
        <strain>OSU 85-389</strain>
    </source>
</reference>
<organism>
    <name type="scientific">Rickettsia bellii (strain OSU 85-389)</name>
    <dbReference type="NCBI Taxonomy" id="391896"/>
    <lineage>
        <taxon>Bacteria</taxon>
        <taxon>Pseudomonadati</taxon>
        <taxon>Pseudomonadota</taxon>
        <taxon>Alphaproteobacteria</taxon>
        <taxon>Rickettsiales</taxon>
        <taxon>Rickettsiaceae</taxon>
        <taxon>Rickettsieae</taxon>
        <taxon>Rickettsia</taxon>
        <taxon>belli group</taxon>
    </lineage>
</organism>
<proteinExistence type="inferred from homology"/>
<feature type="chain" id="PRO_1000004397" description="UDP-N-acetylmuramate--L-alanine ligase">
    <location>
        <begin position="1"/>
        <end position="478"/>
    </location>
</feature>
<feature type="binding site" evidence="1">
    <location>
        <begin position="120"/>
        <end position="126"/>
    </location>
    <ligand>
        <name>ATP</name>
        <dbReference type="ChEBI" id="CHEBI:30616"/>
    </ligand>
</feature>
<dbReference type="EC" id="6.3.2.8" evidence="1"/>
<dbReference type="EMBL" id="CP000849">
    <property type="protein sequence ID" value="ABV79121.1"/>
    <property type="molecule type" value="Genomic_DNA"/>
</dbReference>
<dbReference type="RefSeq" id="WP_012151851.1">
    <property type="nucleotide sequence ID" value="NC_009883.1"/>
</dbReference>
<dbReference type="SMR" id="A8GW94"/>
<dbReference type="KEGG" id="rbo:A1I_03840"/>
<dbReference type="HOGENOM" id="CLU_028104_2_2_5"/>
<dbReference type="UniPathway" id="UPA00219"/>
<dbReference type="GO" id="GO:0005737">
    <property type="term" value="C:cytoplasm"/>
    <property type="evidence" value="ECO:0007669"/>
    <property type="project" value="UniProtKB-SubCell"/>
</dbReference>
<dbReference type="GO" id="GO:0005524">
    <property type="term" value="F:ATP binding"/>
    <property type="evidence" value="ECO:0007669"/>
    <property type="project" value="UniProtKB-UniRule"/>
</dbReference>
<dbReference type="GO" id="GO:0008763">
    <property type="term" value="F:UDP-N-acetylmuramate-L-alanine ligase activity"/>
    <property type="evidence" value="ECO:0007669"/>
    <property type="project" value="UniProtKB-UniRule"/>
</dbReference>
<dbReference type="GO" id="GO:0051301">
    <property type="term" value="P:cell division"/>
    <property type="evidence" value="ECO:0007669"/>
    <property type="project" value="UniProtKB-KW"/>
</dbReference>
<dbReference type="GO" id="GO:0071555">
    <property type="term" value="P:cell wall organization"/>
    <property type="evidence" value="ECO:0007669"/>
    <property type="project" value="UniProtKB-KW"/>
</dbReference>
<dbReference type="GO" id="GO:0009252">
    <property type="term" value="P:peptidoglycan biosynthetic process"/>
    <property type="evidence" value="ECO:0007669"/>
    <property type="project" value="UniProtKB-UniRule"/>
</dbReference>
<dbReference type="GO" id="GO:0008360">
    <property type="term" value="P:regulation of cell shape"/>
    <property type="evidence" value="ECO:0007669"/>
    <property type="project" value="UniProtKB-KW"/>
</dbReference>
<dbReference type="Gene3D" id="3.90.190.20">
    <property type="entry name" value="Mur ligase, C-terminal domain"/>
    <property type="match status" value="1"/>
</dbReference>
<dbReference type="Gene3D" id="3.40.1190.10">
    <property type="entry name" value="Mur-like, catalytic domain"/>
    <property type="match status" value="1"/>
</dbReference>
<dbReference type="Gene3D" id="3.40.50.720">
    <property type="entry name" value="NAD(P)-binding Rossmann-like Domain"/>
    <property type="match status" value="1"/>
</dbReference>
<dbReference type="HAMAP" id="MF_00046">
    <property type="entry name" value="MurC"/>
    <property type="match status" value="1"/>
</dbReference>
<dbReference type="InterPro" id="IPR036565">
    <property type="entry name" value="Mur-like_cat_sf"/>
</dbReference>
<dbReference type="InterPro" id="IPR004101">
    <property type="entry name" value="Mur_ligase_C"/>
</dbReference>
<dbReference type="InterPro" id="IPR036615">
    <property type="entry name" value="Mur_ligase_C_dom_sf"/>
</dbReference>
<dbReference type="InterPro" id="IPR013221">
    <property type="entry name" value="Mur_ligase_cen"/>
</dbReference>
<dbReference type="InterPro" id="IPR000713">
    <property type="entry name" value="Mur_ligase_N"/>
</dbReference>
<dbReference type="InterPro" id="IPR050061">
    <property type="entry name" value="MurCDEF_pg_biosynth"/>
</dbReference>
<dbReference type="InterPro" id="IPR005758">
    <property type="entry name" value="UDP-N-AcMur_Ala_ligase_MurC"/>
</dbReference>
<dbReference type="NCBIfam" id="TIGR01082">
    <property type="entry name" value="murC"/>
    <property type="match status" value="1"/>
</dbReference>
<dbReference type="PANTHER" id="PTHR43445:SF3">
    <property type="entry name" value="UDP-N-ACETYLMURAMATE--L-ALANINE LIGASE"/>
    <property type="match status" value="1"/>
</dbReference>
<dbReference type="PANTHER" id="PTHR43445">
    <property type="entry name" value="UDP-N-ACETYLMURAMATE--L-ALANINE LIGASE-RELATED"/>
    <property type="match status" value="1"/>
</dbReference>
<dbReference type="Pfam" id="PF01225">
    <property type="entry name" value="Mur_ligase"/>
    <property type="match status" value="1"/>
</dbReference>
<dbReference type="Pfam" id="PF02875">
    <property type="entry name" value="Mur_ligase_C"/>
    <property type="match status" value="1"/>
</dbReference>
<dbReference type="Pfam" id="PF08245">
    <property type="entry name" value="Mur_ligase_M"/>
    <property type="match status" value="1"/>
</dbReference>
<dbReference type="SUPFAM" id="SSF51984">
    <property type="entry name" value="MurCD N-terminal domain"/>
    <property type="match status" value="1"/>
</dbReference>
<dbReference type="SUPFAM" id="SSF53623">
    <property type="entry name" value="MurD-like peptide ligases, catalytic domain"/>
    <property type="match status" value="1"/>
</dbReference>
<dbReference type="SUPFAM" id="SSF53244">
    <property type="entry name" value="MurD-like peptide ligases, peptide-binding domain"/>
    <property type="match status" value="1"/>
</dbReference>
<comment type="function">
    <text evidence="1">Cell wall formation.</text>
</comment>
<comment type="catalytic activity">
    <reaction evidence="1">
        <text>UDP-N-acetyl-alpha-D-muramate + L-alanine + ATP = UDP-N-acetyl-alpha-D-muramoyl-L-alanine + ADP + phosphate + H(+)</text>
        <dbReference type="Rhea" id="RHEA:23372"/>
        <dbReference type="ChEBI" id="CHEBI:15378"/>
        <dbReference type="ChEBI" id="CHEBI:30616"/>
        <dbReference type="ChEBI" id="CHEBI:43474"/>
        <dbReference type="ChEBI" id="CHEBI:57972"/>
        <dbReference type="ChEBI" id="CHEBI:70757"/>
        <dbReference type="ChEBI" id="CHEBI:83898"/>
        <dbReference type="ChEBI" id="CHEBI:456216"/>
        <dbReference type="EC" id="6.3.2.8"/>
    </reaction>
</comment>
<comment type="pathway">
    <text evidence="1">Cell wall biogenesis; peptidoglycan biosynthesis.</text>
</comment>
<comment type="subcellular location">
    <subcellularLocation>
        <location evidence="1">Cytoplasm</location>
    </subcellularLocation>
</comment>
<comment type="similarity">
    <text evidence="1">Belongs to the MurCDEF family.</text>
</comment>
<evidence type="ECO:0000255" key="1">
    <source>
        <dbReference type="HAMAP-Rule" id="MF_00046"/>
    </source>
</evidence>
<sequence>MLLLELKKTNQTLETIHFIGIGGVGMSGIAEILHNLGYKVQGSDLSENYNTKRLEAYGIKIFVGHTPQNITNVSYVVVSSAINRNNPEVKEALERKIPIIRRAEMLAELMRLKCSVAVSGSHGKTTTTSLVACLFEAAGLHPTVINGGIINNRSTNAYLGSSNYLIAEADESDATFISIPSTIAIITNIDPEHLDYYKDFDTLINAFRSFITNLPFYGFAVCCIDHKIVRELVNNITERKVITYGIDSDDAHITAFNISTDITSSTFDVKISLPNVSGVTIIEKITIPTPGRHNILNSLAAISVGVELDFGIKAIKNGFNSFKGVKRRFTKVAEYNQASVIDDYAHHPEEIKATLSTAKNIANKQHGKVIAIFQPHRYSRMQHLFDDFMRCFDDADLLYITDVYAAGESHIEGISGQSLIDNIIKLKYHNQANFLAKLDDSLEVIMNKASPGDMIIMMGAGNISNFANELPQKFGNLS</sequence>
<accession>A8GW94</accession>
<gene>
    <name evidence="1" type="primary">murC</name>
    <name type="ordered locus">A1I_03840</name>
</gene>
<protein>
    <recommendedName>
        <fullName evidence="1">UDP-N-acetylmuramate--L-alanine ligase</fullName>
        <ecNumber evidence="1">6.3.2.8</ecNumber>
    </recommendedName>
    <alternativeName>
        <fullName evidence="1">UDP-N-acetylmuramoyl-L-alanine synthetase</fullName>
    </alternativeName>
</protein>
<name>MURC_RICB8</name>